<comment type="function">
    <text evidence="4">Snake venom serine protease that activates plasminogen. Displays indirect fibrino(geno)lytic activity through conversion of plasminogen to plasmin. Shows a preferential cleavage at Arg-|-Xaa instead of Lys-|-Xaa bonds.</text>
</comment>
<comment type="subunit">
    <text evidence="1">Monomer.</text>
</comment>
<comment type="subcellular location">
    <subcellularLocation>
        <location evidence="4">Secreted</location>
    </subcellularLocation>
</comment>
<comment type="tissue specificity">
    <text evidence="4">Expressed by the venom gland.</text>
</comment>
<comment type="PTM">
    <text evidence="4">Glycosylated.</text>
</comment>
<comment type="similarity">
    <text evidence="3">Belongs to the peptidase S1 family. Snake venom subfamily.</text>
</comment>
<name>VSPPA_GLOBR</name>
<evidence type="ECO:0000250" key="1"/>
<evidence type="ECO:0000255" key="2"/>
<evidence type="ECO:0000255" key="3">
    <source>
        <dbReference type="PROSITE-ProRule" id="PRU00274"/>
    </source>
</evidence>
<evidence type="ECO:0000269" key="4">
    <source>
    </source>
</evidence>
<organism>
    <name type="scientific">Gloydius brevicauda</name>
    <name type="common">Korean slamosa snake</name>
    <name type="synonym">Agkistrodon halys brevicaudus</name>
    <dbReference type="NCBI Taxonomy" id="3148161"/>
    <lineage>
        <taxon>Eukaryota</taxon>
        <taxon>Metazoa</taxon>
        <taxon>Chordata</taxon>
        <taxon>Craniata</taxon>
        <taxon>Vertebrata</taxon>
        <taxon>Euteleostomi</taxon>
        <taxon>Lepidosauria</taxon>
        <taxon>Squamata</taxon>
        <taxon>Bifurcata</taxon>
        <taxon>Unidentata</taxon>
        <taxon>Episquamata</taxon>
        <taxon>Toxicofera</taxon>
        <taxon>Serpentes</taxon>
        <taxon>Colubroidea</taxon>
        <taxon>Viperidae</taxon>
        <taxon>Crotalinae</taxon>
        <taxon>Gloydius</taxon>
    </lineage>
</organism>
<sequence length="258" mass="27813">MALIRVLANLLILQLSYAQKSSELVVGGDECNINEHRSLVVLFNSSGLICSGTLINQEWVLTAAHCDSKNFQMLFGVHSKKILNEDEQTRDPKEKFICPNKKKDDEKDKDIMLIRLDSPVSNSEHIAPLSLPSSSPTVDSVCRIMGWGTIKPADETYPDVPHCANINILDHTVCRAAYPVLLAGSSTLCAGTQQGGKDTCVGDSGGPLICNGQIQGIVSWGAHPCGQGSKPGVYTKVFDHLDWIKSIIAGNTAVTCPP</sequence>
<accession>Q9YGJ8</accession>
<protein>
    <recommendedName>
        <fullName>Venom plasminogen activator Haly-PA</fullName>
        <ecNumber>3.4.21.-</ecNumber>
    </recommendedName>
</protein>
<dbReference type="EC" id="3.4.21.-"/>
<dbReference type="EMBL" id="AF017737">
    <property type="protein sequence ID" value="AAD01624.1"/>
    <property type="status" value="ALT_SEQ"/>
    <property type="molecule type" value="mRNA"/>
</dbReference>
<dbReference type="SMR" id="Q9YGJ8"/>
<dbReference type="MEROPS" id="S01.186"/>
<dbReference type="GO" id="GO:0005576">
    <property type="term" value="C:extracellular region"/>
    <property type="evidence" value="ECO:0007669"/>
    <property type="project" value="UniProtKB-SubCell"/>
</dbReference>
<dbReference type="GO" id="GO:0030141">
    <property type="term" value="C:secretory granule"/>
    <property type="evidence" value="ECO:0007669"/>
    <property type="project" value="TreeGrafter"/>
</dbReference>
<dbReference type="GO" id="GO:0004252">
    <property type="term" value="F:serine-type endopeptidase activity"/>
    <property type="evidence" value="ECO:0007669"/>
    <property type="project" value="InterPro"/>
</dbReference>
<dbReference type="GO" id="GO:0090729">
    <property type="term" value="F:toxin activity"/>
    <property type="evidence" value="ECO:0007669"/>
    <property type="project" value="UniProtKB-KW"/>
</dbReference>
<dbReference type="GO" id="GO:0006508">
    <property type="term" value="P:proteolysis"/>
    <property type="evidence" value="ECO:0007669"/>
    <property type="project" value="UniProtKB-KW"/>
</dbReference>
<dbReference type="CDD" id="cd00190">
    <property type="entry name" value="Tryp_SPc"/>
    <property type="match status" value="1"/>
</dbReference>
<dbReference type="FunFam" id="2.40.10.10:FF:000158">
    <property type="entry name" value="Thrombin-like enzyme saxthrombin"/>
    <property type="match status" value="1"/>
</dbReference>
<dbReference type="FunFam" id="2.40.10.10:FF:000153">
    <property type="entry name" value="Venom plasminogen activator TSV-PA"/>
    <property type="match status" value="1"/>
</dbReference>
<dbReference type="Gene3D" id="2.40.10.10">
    <property type="entry name" value="Trypsin-like serine proteases"/>
    <property type="match status" value="2"/>
</dbReference>
<dbReference type="InterPro" id="IPR009003">
    <property type="entry name" value="Peptidase_S1_PA"/>
</dbReference>
<dbReference type="InterPro" id="IPR043504">
    <property type="entry name" value="Peptidase_S1_PA_chymotrypsin"/>
</dbReference>
<dbReference type="InterPro" id="IPR001314">
    <property type="entry name" value="Peptidase_S1A"/>
</dbReference>
<dbReference type="InterPro" id="IPR001254">
    <property type="entry name" value="Trypsin_dom"/>
</dbReference>
<dbReference type="InterPro" id="IPR018114">
    <property type="entry name" value="TRYPSIN_HIS"/>
</dbReference>
<dbReference type="InterPro" id="IPR033116">
    <property type="entry name" value="TRYPSIN_SER"/>
</dbReference>
<dbReference type="PANTHER" id="PTHR24271:SF47">
    <property type="entry name" value="KALLIKREIN-1"/>
    <property type="match status" value="1"/>
</dbReference>
<dbReference type="PANTHER" id="PTHR24271">
    <property type="entry name" value="KALLIKREIN-RELATED"/>
    <property type="match status" value="1"/>
</dbReference>
<dbReference type="Pfam" id="PF00089">
    <property type="entry name" value="Trypsin"/>
    <property type="match status" value="1"/>
</dbReference>
<dbReference type="PRINTS" id="PR00722">
    <property type="entry name" value="CHYMOTRYPSIN"/>
</dbReference>
<dbReference type="SMART" id="SM00020">
    <property type="entry name" value="Tryp_SPc"/>
    <property type="match status" value="1"/>
</dbReference>
<dbReference type="SUPFAM" id="SSF50494">
    <property type="entry name" value="Trypsin-like serine proteases"/>
    <property type="match status" value="1"/>
</dbReference>
<dbReference type="PROSITE" id="PS50240">
    <property type="entry name" value="TRYPSIN_DOM"/>
    <property type="match status" value="1"/>
</dbReference>
<dbReference type="PROSITE" id="PS00134">
    <property type="entry name" value="TRYPSIN_HIS"/>
    <property type="match status" value="1"/>
</dbReference>
<dbReference type="PROSITE" id="PS00135">
    <property type="entry name" value="TRYPSIN_SER"/>
    <property type="match status" value="1"/>
</dbReference>
<proteinExistence type="evidence at protein level"/>
<feature type="signal peptide" evidence="2">
    <location>
        <begin position="1"/>
        <end position="18"/>
    </location>
</feature>
<feature type="propeptide" id="PRO_0000296372" evidence="1">
    <location>
        <begin position="19"/>
        <end position="24"/>
    </location>
</feature>
<feature type="chain" id="PRO_5000053382" description="Venom plasminogen activator Haly-PA">
    <location>
        <begin position="25"/>
        <end position="258"/>
    </location>
</feature>
<feature type="domain" description="Peptidase S1" evidence="3">
    <location>
        <begin position="25"/>
        <end position="249"/>
    </location>
</feature>
<feature type="active site" description="Charge relay system" evidence="1">
    <location>
        <position position="65"/>
    </location>
</feature>
<feature type="active site" description="Charge relay system" evidence="1">
    <location>
        <position position="110"/>
    </location>
</feature>
<feature type="active site" description="Charge relay system" evidence="1">
    <location>
        <position position="204"/>
    </location>
</feature>
<feature type="glycosylation site" description="N-linked (GlcNAc...) asparagine" evidence="2">
    <location>
        <position position="44"/>
    </location>
</feature>
<feature type="disulfide bond" evidence="3">
    <location>
        <begin position="31"/>
        <end position="163"/>
    </location>
</feature>
<feature type="disulfide bond" evidence="3">
    <location>
        <begin position="50"/>
        <end position="66"/>
    </location>
</feature>
<feature type="disulfide bond" evidence="3">
    <location>
        <begin position="98"/>
        <end position="256"/>
    </location>
</feature>
<feature type="disulfide bond" evidence="3">
    <location>
        <begin position="142"/>
        <end position="210"/>
    </location>
</feature>
<feature type="disulfide bond" evidence="3">
    <location>
        <begin position="174"/>
        <end position="189"/>
    </location>
</feature>
<feature type="disulfide bond" evidence="3">
    <location>
        <begin position="200"/>
        <end position="225"/>
    </location>
</feature>
<reference key="1">
    <citation type="journal article" date="1998" name="Toxicon">
        <title>Expression and characterization of a novel plasminogen activator from Agkistrodon halys venom.</title>
        <authorList>
            <person name="Park D.S."/>
            <person name="Kim H.D."/>
            <person name="Chung K.H."/>
            <person name="Kim D.-S."/>
            <person name="Yun Y.D."/>
        </authorList>
    </citation>
    <scope>NUCLEOTIDE SEQUENCE [MRNA]</scope>
    <scope>FUNCTION</scope>
    <scope>CATALYTIC ACTIVITY</scope>
    <scope>SUBCELLULAR LOCATION</scope>
    <scope>TISSUE SPECIFICITY</scope>
    <scope>GLYCOSYLATION</scope>
    <source>
        <tissue>Venom gland</tissue>
    </source>
</reference>
<keyword id="KW-1015">Disulfide bond</keyword>
<keyword id="KW-1205">Fibrinolytic toxin</keyword>
<keyword id="KW-0325">Glycoprotein</keyword>
<keyword id="KW-1199">Hemostasis impairing toxin</keyword>
<keyword id="KW-0378">Hydrolase</keyword>
<keyword id="KW-0617">Plasminogen activation</keyword>
<keyword id="KW-0645">Protease</keyword>
<keyword id="KW-0964">Secreted</keyword>
<keyword id="KW-0720">Serine protease</keyword>
<keyword id="KW-0732">Signal</keyword>
<keyword id="KW-0800">Toxin</keyword>
<keyword id="KW-0865">Zymogen</keyword>